<sequence>MMAHNKNDLTNINTKTTAPTTTTTEQQPEQQQQQPEQQQQEKQNNNNNNNNNNNNNNNINNNENNENNNNDIINNKINLLDELVAAAELKGRYTQIQLEELKSKLDRTSSALNVDQDTIKLAWCLLENMQLVSVDTSEQFQKQIVACSLFICGNKKFSSLLYNLNQPSSSSFQPDNNSKIKGRKIRKTNNSKNKNNDSNEEEEETTTDTEEEEEEDTLLNENNNSINKNSSNNNELLVSIRSCINESGGDSQFLQNSVFLSQLLKHFEGEIKLSQFFDTLRSFISNLRLGNAFEEQGRQLEQSFNTLNNLYRKYEQIFFTLFHPTENYILKTTQQHNYNNNSNNNNNNNNNNNNNNNNNRTNEDYLLSIGWLIFLFCKNKLFTKDSPDFVQSLHLLLCIINFIYVNTSISELKKIPQGVQIIDTATGDILLYLAKSIPCNLDDLSNVNQNIFSTYSNLLINNSILKLFDNNNNNNNNNNNNNNNSDGIKSIFNNSSIIKDNYNSLNKSYELYYYANGDIDERLFYSFDHDIYVLNNNNNNQNNNNNNNNHNNNYYNNNNNNNNNNNNNNHLNYQYSSLLPPSTPTTPSRYGSSSSSGGGGGGNLRKNIYGTPSKSLSAGNLGSVIPQTPISLTLTLESWLKVEIQNYRDPNPSLNLINILKSADQPQQTSEVDKMIERVSSLTNNTDSLFSIGGIDDHQQQQQQQQEVKQRRKNMAIQLYYCLLEKLIKFEQNTSSNINVLLNHEDFHKSLLSNSFEIIAYVYKMEGLYFPHFINVFKLHPFSYLRLIDLVLKVDADLPKLLAQHFSQIEEKILEKYVWSNNSTVFSTIKSHDFQNIFNSNGVGAAITTHLRPTQVFSTPTKNQNNNPFRNQQLINTNIPNTPTKKNPFIQNFIKKVSTLIIAKCRKLIHAMGLSSDYVVQIYQVMIKILIDETLLFKNREIDVLLICSIYAICKVNSKNITFKAIIDKSCISAKVYKEVYIGNDENNNNNNNNNNNNNNNNNNNNNNINNNNNNNENNNNNNNPVKGDIILFYNKIFLTKMDPYIHEVFSKYQQQQQHQYQQPLQNLPPPLLNQNSPKKWNPLFHTPTKNQNNNPYNSNNNTPNKFSSSIPLSPQKGVNYNSSFSVNSMVTISPMKQHTPISSSYTYIVAKSPSKELFQINQCLNKKKNDEMVPPPPTTPSSINNNNNNNNNNNNNNNNNNNNNSNDNNNNNNNNNNNNNNNNSNNNSNNNNNTEKKMVGKRLLFDYEESPSTPSSSSSPTILNNNKKNNNNNKSENVDDPGNNSPSSSPLSSSSSSSSSSSSGGRKRLKS</sequence>
<feature type="chain" id="PRO_0000431811" description="Retinoblastoma-like protein A">
    <location>
        <begin position="1"/>
        <end position="1312"/>
    </location>
</feature>
<feature type="region of interest" description="Disordered" evidence="3">
    <location>
        <begin position="1"/>
        <end position="67"/>
    </location>
</feature>
<feature type="region of interest" description="Disordered" evidence="3">
    <location>
        <begin position="168"/>
        <end position="231"/>
    </location>
</feature>
<feature type="region of interest" description="Disordered" evidence="3">
    <location>
        <begin position="336"/>
        <end position="359"/>
    </location>
</feature>
<feature type="region of interest" description="Disordered" evidence="3">
    <location>
        <begin position="536"/>
        <end position="611"/>
    </location>
</feature>
<feature type="region of interest" description="Disordered" evidence="3">
    <location>
        <begin position="987"/>
        <end position="1023"/>
    </location>
</feature>
<feature type="region of interest" description="Disordered" evidence="3">
    <location>
        <begin position="1168"/>
        <end position="1236"/>
    </location>
</feature>
<feature type="region of interest" description="Disordered" evidence="3">
    <location>
        <begin position="1249"/>
        <end position="1312"/>
    </location>
</feature>
<feature type="coiled-coil region" evidence="2">
    <location>
        <begin position="36"/>
        <end position="117"/>
    </location>
</feature>
<feature type="coiled-coil region" evidence="2">
    <location>
        <begin position="195"/>
        <end position="230"/>
    </location>
</feature>
<feature type="compositionally biased region" description="Low complexity" evidence="3">
    <location>
        <begin position="10"/>
        <end position="67"/>
    </location>
</feature>
<feature type="compositionally biased region" description="Polar residues" evidence="3">
    <location>
        <begin position="168"/>
        <end position="179"/>
    </location>
</feature>
<feature type="compositionally biased region" description="Basic residues" evidence="3">
    <location>
        <begin position="180"/>
        <end position="189"/>
    </location>
</feature>
<feature type="compositionally biased region" description="Acidic residues" evidence="3">
    <location>
        <begin position="198"/>
        <end position="218"/>
    </location>
</feature>
<feature type="compositionally biased region" description="Low complexity" evidence="3">
    <location>
        <begin position="219"/>
        <end position="231"/>
    </location>
</feature>
<feature type="compositionally biased region" description="Low complexity" evidence="3">
    <location>
        <begin position="337"/>
        <end position="359"/>
    </location>
</feature>
<feature type="compositionally biased region" description="Low complexity" evidence="3">
    <location>
        <begin position="536"/>
        <end position="595"/>
    </location>
</feature>
<feature type="compositionally biased region" description="Low complexity" evidence="3">
    <location>
        <begin position="1185"/>
        <end position="1234"/>
    </location>
</feature>
<feature type="compositionally biased region" description="Low complexity" evidence="3">
    <location>
        <begin position="1251"/>
        <end position="1275"/>
    </location>
</feature>
<feature type="compositionally biased region" description="Low complexity" evidence="3">
    <location>
        <begin position="1286"/>
        <end position="1305"/>
    </location>
</feature>
<comment type="function">
    <text evidence="1 4 5 6 7">Key regulator of entry into cell division. Directly involved in heterochromatin formation by maintaining overall chromatin structure and, in particular, that of constitutive heterochromatin by stabilizing histone methylation. Controls histone H4 'Lys-20' trimethylation. Probably acts as a transcription repressor by recruiting chromatin-modifying enzymes to promoters (By similarity). Plays a dual role, regulating cell-cycle progression and transcriptional events leading to terminal differentiation. In the absence of a G1 phase, functions in late G2 controlling the expression of both S-phase and mitotic genes. Controls stalk/spore preference by suppressing the DIF response in cells destined for the spore pathway. DIF is a chlorinated hydroxyphenone made by cells of spore pathway that promotes stalk differentiation.</text>
</comment>
<comment type="subcellular location">
    <subcellularLocation>
        <location evidence="1">Nucleus</location>
    </subcellularLocation>
</comment>
<comment type="induction">
    <text evidence="4">In the growth phase, expression is correlated with several factors that lead to preference for the spore pathway. During multicellular development, expression increases 200-fold in differentiating spores.</text>
</comment>
<comment type="disruption phenotype">
    <text evidence="4 5 7">In shaking culture, leads to a higher density, a faster dying after reaching stationary density, and, after starvation, a lower spore viability. However, shows abnormal slow proliferation on bacterial lawns. Also leads to hypersensitivity to the stalk morphogen DIF.</text>
</comment>
<comment type="similarity">
    <text evidence="9">Belongs to the retinoblastoma protein (RB) family.</text>
</comment>
<reference key="1">
    <citation type="submission" date="2005-04" db="EMBL/GenBank/DDBJ databases">
        <title>Identification of a retinoblastoma homologue gene in Dictyostelium cells.</title>
        <authorList>
            <person name="Mayanagi T."/>
            <person name="Amagai A."/>
            <person name="Maeda Y."/>
        </authorList>
    </citation>
    <scope>NUCLEOTIDE SEQUENCE [GENOMIC DNA]</scope>
</reference>
<reference key="2">
    <citation type="journal article" date="2005" name="Nature">
        <title>The genome of the social amoeba Dictyostelium discoideum.</title>
        <authorList>
            <person name="Eichinger L."/>
            <person name="Pachebat J.A."/>
            <person name="Gloeckner G."/>
            <person name="Rajandream M.A."/>
            <person name="Sucgang R."/>
            <person name="Berriman M."/>
            <person name="Song J."/>
            <person name="Olsen R."/>
            <person name="Szafranski K."/>
            <person name="Xu Q."/>
            <person name="Tunggal B."/>
            <person name="Kummerfeld S."/>
            <person name="Madera M."/>
            <person name="Konfortov B.A."/>
            <person name="Rivero F."/>
            <person name="Bankier A.T."/>
            <person name="Lehmann R."/>
            <person name="Hamlin N."/>
            <person name="Davies R."/>
            <person name="Gaudet P."/>
            <person name="Fey P."/>
            <person name="Pilcher K."/>
            <person name="Chen G."/>
            <person name="Saunders D."/>
            <person name="Sodergren E.J."/>
            <person name="Davis P."/>
            <person name="Kerhornou A."/>
            <person name="Nie X."/>
            <person name="Hall N."/>
            <person name="Anjard C."/>
            <person name="Hemphill L."/>
            <person name="Bason N."/>
            <person name="Farbrother P."/>
            <person name="Desany B."/>
            <person name="Just E."/>
            <person name="Morio T."/>
            <person name="Rost R."/>
            <person name="Churcher C.M."/>
            <person name="Cooper J."/>
            <person name="Haydock S."/>
            <person name="van Driessche N."/>
            <person name="Cronin A."/>
            <person name="Goodhead I."/>
            <person name="Muzny D.M."/>
            <person name="Mourier T."/>
            <person name="Pain A."/>
            <person name="Lu M."/>
            <person name="Harper D."/>
            <person name="Lindsay R."/>
            <person name="Hauser H."/>
            <person name="James K.D."/>
            <person name="Quiles M."/>
            <person name="Madan Babu M."/>
            <person name="Saito T."/>
            <person name="Buchrieser C."/>
            <person name="Wardroper A."/>
            <person name="Felder M."/>
            <person name="Thangavelu M."/>
            <person name="Johnson D."/>
            <person name="Knights A."/>
            <person name="Loulseged H."/>
            <person name="Mungall K.L."/>
            <person name="Oliver K."/>
            <person name="Price C."/>
            <person name="Quail M.A."/>
            <person name="Urushihara H."/>
            <person name="Hernandez J."/>
            <person name="Rabbinowitsch E."/>
            <person name="Steffen D."/>
            <person name="Sanders M."/>
            <person name="Ma J."/>
            <person name="Kohara Y."/>
            <person name="Sharp S."/>
            <person name="Simmonds M.N."/>
            <person name="Spiegler S."/>
            <person name="Tivey A."/>
            <person name="Sugano S."/>
            <person name="White B."/>
            <person name="Walker D."/>
            <person name="Woodward J.R."/>
            <person name="Winckler T."/>
            <person name="Tanaka Y."/>
            <person name="Shaulsky G."/>
            <person name="Schleicher M."/>
            <person name="Weinstock G.M."/>
            <person name="Rosenthal A."/>
            <person name="Cox E.C."/>
            <person name="Chisholm R.L."/>
            <person name="Gibbs R.A."/>
            <person name="Loomis W.F."/>
            <person name="Platzer M."/>
            <person name="Kay R.R."/>
            <person name="Williams J.G."/>
            <person name="Dear P.H."/>
            <person name="Noegel A.A."/>
            <person name="Barrell B.G."/>
            <person name="Kuspa A."/>
        </authorList>
    </citation>
    <scope>NUCLEOTIDE SEQUENCE [LARGE SCALE GENOMIC DNA]</scope>
    <source>
        <strain>AX4</strain>
    </source>
</reference>
<reference key="3">
    <citation type="journal article" date="2006" name="Development">
        <title>A retinoblastoma ortholog controls stalk/spore preference in Dictyostelium.</title>
        <authorList>
            <person name="MacWilliams H."/>
            <person name="Doquang K."/>
            <person name="Pedrola R."/>
            <person name="Dollman G."/>
            <person name="Grassi D."/>
            <person name="Peis T."/>
            <person name="Tsang A."/>
            <person name="Ceccarelli A."/>
        </authorList>
    </citation>
    <scope>INDUCTION</scope>
    <scope>DISRUPTION PHENOTYPE</scope>
    <scope>FUNCTION</scope>
</reference>
<reference key="4">
    <citation type="journal article" date="2010" name="PLoS ONE">
        <title>BTG interacts with retinoblastoma to control cell fate in Dictyostelium.</title>
        <authorList>
            <person name="Conte D."/>
            <person name="MacWilliams H.K."/>
            <person name="Ceccarelli A."/>
        </authorList>
    </citation>
    <scope>DISRUPTION PHENOTYPE</scope>
    <scope>FUNCTION</scope>
</reference>
<reference key="5">
    <citation type="journal article" date="2012" name="PLoS ONE">
        <title>A retinoblastoma orthologue is a major regulator of S-phase, mitotic, and developmental gene expression in Dictyostelium.</title>
        <authorList>
            <person name="Strasser K."/>
            <person name="Bloomfield G."/>
            <person name="MacWilliams A."/>
            <person name="Ceccarelli A."/>
            <person name="MacWilliams H."/>
            <person name="Tsang A."/>
        </authorList>
    </citation>
    <scope>FUNCTION</scope>
</reference>
<reference key="6">
    <citation type="journal article" date="2014" name="Eukaryot. Cell">
        <title>A retinoblastoma orthologue is required for the sensing of a chalone in Dictyostelium discoideum.</title>
        <authorList>
            <person name="Bakthavatsalam D."/>
            <person name="White M.J."/>
            <person name="Herlihy S.E."/>
            <person name="Phillips J.E."/>
            <person name="Gomer R.H."/>
        </authorList>
    </citation>
    <scope>DISRUPTION PHENOTYPE</scope>
    <scope>FUNCTION</scope>
</reference>
<keyword id="KW-0131">Cell cycle</keyword>
<keyword id="KW-0156">Chromatin regulator</keyword>
<keyword id="KW-0175">Coiled coil</keyword>
<keyword id="KW-0238">DNA-binding</keyword>
<keyword id="KW-0539">Nucleus</keyword>
<keyword id="KW-1185">Reference proteome</keyword>
<keyword id="KW-0678">Repressor</keyword>
<keyword id="KW-0804">Transcription</keyword>
<keyword id="KW-0805">Transcription regulation</keyword>
<dbReference type="EMBL" id="AB211596">
    <property type="protein sequence ID" value="BAD95800.1"/>
    <property type="molecule type" value="Genomic_DNA"/>
</dbReference>
<dbReference type="EMBL" id="AAFI02000164">
    <property type="protein sequence ID" value="EAL62136.1"/>
    <property type="molecule type" value="Genomic_DNA"/>
</dbReference>
<dbReference type="RefSeq" id="XP_635645.1">
    <property type="nucleotide sequence ID" value="XM_630553.1"/>
</dbReference>
<dbReference type="SMR" id="Q54FX2"/>
<dbReference type="FunCoup" id="Q54FX2">
    <property type="interactions" value="6"/>
</dbReference>
<dbReference type="STRING" id="44689.Q54FX2"/>
<dbReference type="GlyGen" id="Q54FX2">
    <property type="glycosylation" value="4 sites"/>
</dbReference>
<dbReference type="PaxDb" id="44689-DDB0232004"/>
<dbReference type="EnsemblProtists" id="EAL62136">
    <property type="protein sequence ID" value="EAL62136"/>
    <property type="gene ID" value="DDB_G0290551"/>
</dbReference>
<dbReference type="GeneID" id="8627717"/>
<dbReference type="KEGG" id="ddi:DDB_G0290551"/>
<dbReference type="dictyBase" id="DDB_G0290551">
    <property type="gene designation" value="rblA"/>
</dbReference>
<dbReference type="VEuPathDB" id="AmoebaDB:DDB_G0290551"/>
<dbReference type="eggNOG" id="KOG1010">
    <property type="taxonomic scope" value="Eukaryota"/>
</dbReference>
<dbReference type="HOGENOM" id="CLU_260636_0_0_1"/>
<dbReference type="InParanoid" id="Q54FX2"/>
<dbReference type="OMA" id="VYCQSTQ"/>
<dbReference type="PhylomeDB" id="Q54FX2"/>
<dbReference type="Reactome" id="R-DDI-113501">
    <property type="pathway name" value="Inhibition of replication initiation of damaged DNA by RB1/E2F1"/>
</dbReference>
<dbReference type="Reactome" id="R-DDI-1538133">
    <property type="pathway name" value="G0 and Early G1"/>
</dbReference>
<dbReference type="Reactome" id="R-DDI-174178">
    <property type="pathway name" value="APC/C:Cdh1 mediated degradation of Cdc20 and other APC/C:Cdh1 targeted proteins in late mitosis/early G1"/>
</dbReference>
<dbReference type="Reactome" id="R-DDI-2299718">
    <property type="pathway name" value="Condensation of Prophase Chromosomes"/>
</dbReference>
<dbReference type="Reactome" id="R-DDI-69231">
    <property type="pathway name" value="Cyclin D associated events in G1"/>
</dbReference>
<dbReference type="PRO" id="PR:Q54FX2"/>
<dbReference type="Proteomes" id="UP000002195">
    <property type="component" value="Chromosome 5"/>
</dbReference>
<dbReference type="GO" id="GO:0000785">
    <property type="term" value="C:chromatin"/>
    <property type="evidence" value="ECO:0000318"/>
    <property type="project" value="GO_Central"/>
</dbReference>
<dbReference type="GO" id="GO:0005634">
    <property type="term" value="C:nucleus"/>
    <property type="evidence" value="ECO:0007669"/>
    <property type="project" value="UniProtKB-SubCell"/>
</dbReference>
<dbReference type="GO" id="GO:0005667">
    <property type="term" value="C:transcription regulator complex"/>
    <property type="evidence" value="ECO:0000250"/>
    <property type="project" value="dictyBase"/>
</dbReference>
<dbReference type="GO" id="GO:0000977">
    <property type="term" value="F:RNA polymerase II transcription regulatory region sequence-specific DNA binding"/>
    <property type="evidence" value="ECO:0000318"/>
    <property type="project" value="GO_Central"/>
</dbReference>
<dbReference type="GO" id="GO:0000976">
    <property type="term" value="F:transcription cis-regulatory region binding"/>
    <property type="evidence" value="ECO:0000250"/>
    <property type="project" value="dictyBase"/>
</dbReference>
<dbReference type="GO" id="GO:0030154">
    <property type="term" value="P:cell differentiation"/>
    <property type="evidence" value="ECO:0000318"/>
    <property type="project" value="GO_Central"/>
</dbReference>
<dbReference type="GO" id="GO:0045165">
    <property type="term" value="P:cell fate commitment"/>
    <property type="evidence" value="ECO:0000316"/>
    <property type="project" value="dictyBase"/>
</dbReference>
<dbReference type="GO" id="GO:0006325">
    <property type="term" value="P:chromatin organization"/>
    <property type="evidence" value="ECO:0007669"/>
    <property type="project" value="UniProtKB-KW"/>
</dbReference>
<dbReference type="GO" id="GO:0140986">
    <property type="term" value="P:G protein-coupled chemorepellent receptor signaling pathway"/>
    <property type="evidence" value="ECO:0000315"/>
    <property type="project" value="dictyBase"/>
</dbReference>
<dbReference type="GO" id="GO:1903665">
    <property type="term" value="P:negative regulation of asexual reproduction"/>
    <property type="evidence" value="ECO:0000315"/>
    <property type="project" value="dictyBase"/>
</dbReference>
<dbReference type="GO" id="GO:0045786">
    <property type="term" value="P:negative regulation of cell cycle"/>
    <property type="evidence" value="ECO:0000250"/>
    <property type="project" value="dictyBase"/>
</dbReference>
<dbReference type="GO" id="GO:2000134">
    <property type="term" value="P:negative regulation of G1/S transition of mitotic cell cycle"/>
    <property type="evidence" value="ECO:0000318"/>
    <property type="project" value="GO_Central"/>
</dbReference>
<dbReference type="GO" id="GO:0000122">
    <property type="term" value="P:negative regulation of transcription by RNA polymerase II"/>
    <property type="evidence" value="ECO:0000315"/>
    <property type="project" value="dictyBase"/>
</dbReference>
<dbReference type="GO" id="GO:0010628">
    <property type="term" value="P:positive regulation of gene expression"/>
    <property type="evidence" value="ECO:0000315"/>
    <property type="project" value="dictyBase"/>
</dbReference>
<dbReference type="GO" id="GO:0010389">
    <property type="term" value="P:regulation of G2/M transition of mitotic cell cycle"/>
    <property type="evidence" value="ECO:0000270"/>
    <property type="project" value="dictyBase"/>
</dbReference>
<dbReference type="GO" id="GO:0031156">
    <property type="term" value="P:regulation of sorocarp development"/>
    <property type="evidence" value="ECO:0000270"/>
    <property type="project" value="dictyBase"/>
</dbReference>
<dbReference type="CDD" id="cd20548">
    <property type="entry name" value="CYCLIN_RB-like"/>
    <property type="match status" value="1"/>
</dbReference>
<dbReference type="FunFam" id="1.10.472.10:FF:000247">
    <property type="entry name" value="Retinoblastoma family protein"/>
    <property type="match status" value="1"/>
</dbReference>
<dbReference type="Gene3D" id="1.10.472.140">
    <property type="match status" value="1"/>
</dbReference>
<dbReference type="Gene3D" id="1.10.472.10">
    <property type="entry name" value="Cyclin-like"/>
    <property type="match status" value="2"/>
</dbReference>
<dbReference type="InterPro" id="IPR036915">
    <property type="entry name" value="Cyclin-like_sf"/>
</dbReference>
<dbReference type="InterPro" id="IPR002720">
    <property type="entry name" value="RB_A"/>
</dbReference>
<dbReference type="InterPro" id="IPR002719">
    <property type="entry name" value="RB_B"/>
</dbReference>
<dbReference type="InterPro" id="IPR028309">
    <property type="entry name" value="RB_fam"/>
</dbReference>
<dbReference type="InterPro" id="IPR024599">
    <property type="entry name" value="RB_N"/>
</dbReference>
<dbReference type="PANTHER" id="PTHR13742:SF17">
    <property type="entry name" value="RE32990P-RELATED"/>
    <property type="match status" value="1"/>
</dbReference>
<dbReference type="PANTHER" id="PTHR13742">
    <property type="entry name" value="RETINOBLASTOMA-ASSOCIATED PROTEIN RB -RELATED"/>
    <property type="match status" value="1"/>
</dbReference>
<dbReference type="Pfam" id="PF11934">
    <property type="entry name" value="DUF3452"/>
    <property type="match status" value="1"/>
</dbReference>
<dbReference type="Pfam" id="PF01858">
    <property type="entry name" value="RB_A"/>
    <property type="match status" value="1"/>
</dbReference>
<dbReference type="Pfam" id="PF01857">
    <property type="entry name" value="RB_B"/>
    <property type="match status" value="1"/>
</dbReference>
<dbReference type="SMART" id="SM01367">
    <property type="entry name" value="DUF3452"/>
    <property type="match status" value="1"/>
</dbReference>
<dbReference type="SMART" id="SM01368">
    <property type="entry name" value="RB_A"/>
    <property type="match status" value="1"/>
</dbReference>
<dbReference type="SUPFAM" id="SSF47954">
    <property type="entry name" value="Cyclin-like"/>
    <property type="match status" value="2"/>
</dbReference>
<accession>Q54FX2</accession>
<accession>Q53U28</accession>
<protein>
    <recommendedName>
        <fullName>Retinoblastoma-like protein A</fullName>
    </recommendedName>
</protein>
<proteinExistence type="evidence at transcript level"/>
<evidence type="ECO:0000250" key="1">
    <source>
        <dbReference type="UniProtKB" id="Q08999"/>
    </source>
</evidence>
<evidence type="ECO:0000255" key="2"/>
<evidence type="ECO:0000256" key="3">
    <source>
        <dbReference type="SAM" id="MobiDB-lite"/>
    </source>
</evidence>
<evidence type="ECO:0000269" key="4">
    <source>
    </source>
</evidence>
<evidence type="ECO:0000269" key="5">
    <source>
    </source>
</evidence>
<evidence type="ECO:0000269" key="6">
    <source>
    </source>
</evidence>
<evidence type="ECO:0000269" key="7">
    <source>
    </source>
</evidence>
<evidence type="ECO:0000303" key="8">
    <source>
    </source>
</evidence>
<evidence type="ECO:0000305" key="9"/>
<evidence type="ECO:0000312" key="10">
    <source>
        <dbReference type="dictyBase" id="DDB_G0290551"/>
    </source>
</evidence>
<gene>
    <name evidence="8" type="primary">rblA</name>
    <name evidence="10" type="synonym">Rb</name>
    <name evidence="10" type="ORF">DDB0188949</name>
</gene>
<name>RBLA_DICDI</name>
<organism>
    <name type="scientific">Dictyostelium discoideum</name>
    <name type="common">Social amoeba</name>
    <dbReference type="NCBI Taxonomy" id="44689"/>
    <lineage>
        <taxon>Eukaryota</taxon>
        <taxon>Amoebozoa</taxon>
        <taxon>Evosea</taxon>
        <taxon>Eumycetozoa</taxon>
        <taxon>Dictyostelia</taxon>
        <taxon>Dictyosteliales</taxon>
        <taxon>Dictyosteliaceae</taxon>
        <taxon>Dictyostelium</taxon>
    </lineage>
</organism>